<dbReference type="EC" id="7.2.2.20" evidence="1"/>
<dbReference type="EMBL" id="AE003852">
    <property type="protein sequence ID" value="AAF95228.1"/>
    <property type="molecule type" value="Genomic_DNA"/>
</dbReference>
<dbReference type="PIR" id="E82120">
    <property type="entry name" value="E82120"/>
</dbReference>
<dbReference type="RefSeq" id="NP_231714.1">
    <property type="nucleotide sequence ID" value="NC_002505.1"/>
</dbReference>
<dbReference type="RefSeq" id="WP_000996146.1">
    <property type="nucleotide sequence ID" value="NZ_LT906614.1"/>
</dbReference>
<dbReference type="SMR" id="Q9KQB8"/>
<dbReference type="STRING" id="243277.VC_2082"/>
<dbReference type="DNASU" id="2613338"/>
<dbReference type="EnsemblBacteria" id="AAF95228">
    <property type="protein sequence ID" value="AAF95228"/>
    <property type="gene ID" value="VC_2082"/>
</dbReference>
<dbReference type="GeneID" id="89513932"/>
<dbReference type="KEGG" id="vch:VC_2082"/>
<dbReference type="PATRIC" id="fig|243277.26.peg.1989"/>
<dbReference type="eggNOG" id="COG1121">
    <property type="taxonomic scope" value="Bacteria"/>
</dbReference>
<dbReference type="HOGENOM" id="CLU_000604_1_11_6"/>
<dbReference type="Proteomes" id="UP000000584">
    <property type="component" value="Chromosome 1"/>
</dbReference>
<dbReference type="GO" id="GO:0043190">
    <property type="term" value="C:ATP-binding cassette (ABC) transporter complex"/>
    <property type="evidence" value="ECO:0000318"/>
    <property type="project" value="GO_Central"/>
</dbReference>
<dbReference type="GO" id="GO:0015633">
    <property type="term" value="F:ABC-type zinc transporter activity"/>
    <property type="evidence" value="ECO:0007669"/>
    <property type="project" value="UniProtKB-EC"/>
</dbReference>
<dbReference type="GO" id="GO:0005524">
    <property type="term" value="F:ATP binding"/>
    <property type="evidence" value="ECO:0007669"/>
    <property type="project" value="UniProtKB-KW"/>
</dbReference>
<dbReference type="GO" id="GO:0016887">
    <property type="term" value="F:ATP hydrolysis activity"/>
    <property type="evidence" value="ECO:0007669"/>
    <property type="project" value="InterPro"/>
</dbReference>
<dbReference type="GO" id="GO:0042626">
    <property type="term" value="F:ATPase-coupled transmembrane transporter activity"/>
    <property type="evidence" value="ECO:0000318"/>
    <property type="project" value="GO_Central"/>
</dbReference>
<dbReference type="GO" id="GO:0010043">
    <property type="term" value="P:response to zinc ion"/>
    <property type="evidence" value="ECO:0000318"/>
    <property type="project" value="GO_Central"/>
</dbReference>
<dbReference type="FunFam" id="3.40.50.300:FF:000392">
    <property type="entry name" value="Zinc import ATP-binding protein ZnuC"/>
    <property type="match status" value="1"/>
</dbReference>
<dbReference type="Gene3D" id="3.40.50.300">
    <property type="entry name" value="P-loop containing nucleotide triphosphate hydrolases"/>
    <property type="match status" value="1"/>
</dbReference>
<dbReference type="InterPro" id="IPR003593">
    <property type="entry name" value="AAA+_ATPase"/>
</dbReference>
<dbReference type="InterPro" id="IPR003439">
    <property type="entry name" value="ABC_transporter-like_ATP-bd"/>
</dbReference>
<dbReference type="InterPro" id="IPR050153">
    <property type="entry name" value="Metal_Ion_Import_ABC"/>
</dbReference>
<dbReference type="InterPro" id="IPR027417">
    <property type="entry name" value="P-loop_NTPase"/>
</dbReference>
<dbReference type="NCBIfam" id="NF007090">
    <property type="entry name" value="PRK09544.1"/>
    <property type="match status" value="1"/>
</dbReference>
<dbReference type="PANTHER" id="PTHR42734">
    <property type="entry name" value="METAL TRANSPORT SYSTEM ATP-BINDING PROTEIN TM_0124-RELATED"/>
    <property type="match status" value="1"/>
</dbReference>
<dbReference type="PANTHER" id="PTHR42734:SF9">
    <property type="entry name" value="ZINC IMPORT ATP-BINDING PROTEIN ZNUC"/>
    <property type="match status" value="1"/>
</dbReference>
<dbReference type="Pfam" id="PF00005">
    <property type="entry name" value="ABC_tran"/>
    <property type="match status" value="1"/>
</dbReference>
<dbReference type="SMART" id="SM00382">
    <property type="entry name" value="AAA"/>
    <property type="match status" value="1"/>
</dbReference>
<dbReference type="SUPFAM" id="SSF52540">
    <property type="entry name" value="P-loop containing nucleoside triphosphate hydrolases"/>
    <property type="match status" value="1"/>
</dbReference>
<dbReference type="PROSITE" id="PS50893">
    <property type="entry name" value="ABC_TRANSPORTER_2"/>
    <property type="match status" value="1"/>
</dbReference>
<dbReference type="PROSITE" id="PS51298">
    <property type="entry name" value="ZNUC"/>
    <property type="match status" value="1"/>
</dbReference>
<reference key="1">
    <citation type="journal article" date="2000" name="Nature">
        <title>DNA sequence of both chromosomes of the cholera pathogen Vibrio cholerae.</title>
        <authorList>
            <person name="Heidelberg J.F."/>
            <person name="Eisen J.A."/>
            <person name="Nelson W.C."/>
            <person name="Clayton R.A."/>
            <person name="Gwinn M.L."/>
            <person name="Dodson R.J."/>
            <person name="Haft D.H."/>
            <person name="Hickey E.K."/>
            <person name="Peterson J.D."/>
            <person name="Umayam L.A."/>
            <person name="Gill S.R."/>
            <person name="Nelson K.E."/>
            <person name="Read T.D."/>
            <person name="Tettelin H."/>
            <person name="Richardson D.L."/>
            <person name="Ermolaeva M.D."/>
            <person name="Vamathevan J.J."/>
            <person name="Bass S."/>
            <person name="Qin H."/>
            <person name="Dragoi I."/>
            <person name="Sellers P."/>
            <person name="McDonald L.A."/>
            <person name="Utterback T.R."/>
            <person name="Fleischmann R.D."/>
            <person name="Nierman W.C."/>
            <person name="White O."/>
            <person name="Salzberg S.L."/>
            <person name="Smith H.O."/>
            <person name="Colwell R.R."/>
            <person name="Mekalanos J.J."/>
            <person name="Venter J.C."/>
            <person name="Fraser C.M."/>
        </authorList>
    </citation>
    <scope>NUCLEOTIDE SEQUENCE [LARGE SCALE GENOMIC DNA]</scope>
    <source>
        <strain>ATCC 39315 / El Tor Inaba N16961</strain>
    </source>
</reference>
<sequence>MAILIELQDICVDFEQRRVLDNIRLTLTKGNITTLIGPNGAGKSTLVKVILGLQSLSSGKIIRQSGIRIGYVPQKLKLNDTLPLTVNRFLKLAGRFSTQELSEALRLVGGEHLQSSDMHKLSGGETQRVLLARALLQRPDLLVLDEPAQGVDVQGQIDLYDLIHTLRNRFGCAVLMVSHDLHLVMAKTDEVICLQHHVCCSGSPESIAKHPSYLAMFGHRSRDTLAFYQHHHEHHHHDLSGLPVKGKASVCSHHSHGHHKHD</sequence>
<keyword id="KW-0067">ATP-binding</keyword>
<keyword id="KW-0997">Cell inner membrane</keyword>
<keyword id="KW-1003">Cell membrane</keyword>
<keyword id="KW-0406">Ion transport</keyword>
<keyword id="KW-0472">Membrane</keyword>
<keyword id="KW-0547">Nucleotide-binding</keyword>
<keyword id="KW-1185">Reference proteome</keyword>
<keyword id="KW-1278">Translocase</keyword>
<keyword id="KW-0813">Transport</keyword>
<keyword id="KW-0862">Zinc</keyword>
<keyword id="KW-0864">Zinc transport</keyword>
<proteinExistence type="inferred from homology"/>
<gene>
    <name evidence="1" type="primary">znuC</name>
    <name type="ordered locus">VC_2082</name>
</gene>
<name>ZNUC_VIBCH</name>
<comment type="function">
    <text evidence="1">Part of the ABC transporter complex ZnuABC involved in zinc import. Responsible for energy coupling to the transport system.</text>
</comment>
<comment type="catalytic activity">
    <reaction evidence="1">
        <text>Zn(2+)(out) + ATP(in) + H2O(in) = Zn(2+)(in) + ADP(in) + phosphate(in) + H(+)(in)</text>
        <dbReference type="Rhea" id="RHEA:29795"/>
        <dbReference type="ChEBI" id="CHEBI:15377"/>
        <dbReference type="ChEBI" id="CHEBI:15378"/>
        <dbReference type="ChEBI" id="CHEBI:29105"/>
        <dbReference type="ChEBI" id="CHEBI:30616"/>
        <dbReference type="ChEBI" id="CHEBI:43474"/>
        <dbReference type="ChEBI" id="CHEBI:456216"/>
        <dbReference type="EC" id="7.2.2.20"/>
    </reaction>
</comment>
<comment type="subunit">
    <text evidence="1">The complex is composed of two ATP-binding proteins (ZnuC), two transmembrane proteins (ZnuB) and a solute-binding protein (ZnuA).</text>
</comment>
<comment type="subcellular location">
    <subcellularLocation>
        <location evidence="1">Cell inner membrane</location>
        <topology evidence="1">Peripheral membrane protein</topology>
    </subcellularLocation>
</comment>
<comment type="similarity">
    <text evidence="1">Belongs to the ABC transporter superfamily. Zinc importer (TC 3.A.1.15.5) family.</text>
</comment>
<evidence type="ECO:0000255" key="1">
    <source>
        <dbReference type="HAMAP-Rule" id="MF_01725"/>
    </source>
</evidence>
<accession>Q9KQB8</accession>
<protein>
    <recommendedName>
        <fullName evidence="1">Zinc import ATP-binding protein ZnuC</fullName>
        <ecNumber evidence="1">7.2.2.20</ecNumber>
    </recommendedName>
</protein>
<feature type="chain" id="PRO_0000281559" description="Zinc import ATP-binding protein ZnuC">
    <location>
        <begin position="1"/>
        <end position="262"/>
    </location>
</feature>
<feature type="domain" description="ABC transporter" evidence="1">
    <location>
        <begin position="5"/>
        <end position="220"/>
    </location>
</feature>
<feature type="binding site" evidence="1">
    <location>
        <begin position="37"/>
        <end position="44"/>
    </location>
    <ligand>
        <name>ATP</name>
        <dbReference type="ChEBI" id="CHEBI:30616"/>
    </ligand>
</feature>
<organism>
    <name type="scientific">Vibrio cholerae serotype O1 (strain ATCC 39315 / El Tor Inaba N16961)</name>
    <dbReference type="NCBI Taxonomy" id="243277"/>
    <lineage>
        <taxon>Bacteria</taxon>
        <taxon>Pseudomonadati</taxon>
        <taxon>Pseudomonadota</taxon>
        <taxon>Gammaproteobacteria</taxon>
        <taxon>Vibrionales</taxon>
        <taxon>Vibrionaceae</taxon>
        <taxon>Vibrio</taxon>
    </lineage>
</organism>